<keyword id="KW-0067">ATP-binding</keyword>
<keyword id="KW-0436">Ligase</keyword>
<keyword id="KW-0547">Nucleotide-binding</keyword>
<keyword id="KW-0648">Protein biosynthesis</keyword>
<keyword id="KW-1185">Reference proteome</keyword>
<sequence length="488" mass="52320">MSFNHKTIEELHDLLVAKEISATELTQATLEDIKSREEAVGSFITVSEEVALKQAAAIDAKGIDADNLMSGIPLAVKDNISTKEILTTAASKMLYNYEPIFNATSVANAYAKDMIVIGKTNMDEFAMGGSTETSYFKKTKNAWDHTKVPGGSSGGSATAVASGQVRLSLGSDTGGSIRQPAAFNSVVGLKPTYGTVSRYGLIAFGSSLDQIGPFAPTVKENAQLLNVIASSDVKDATSAPVRIADYTSKIGRDIKGMKIALPKEYLGEGIDPEIKETVLASVKQFEALGATVEEVSLPHSKYGVAVYYIIASSEASSNLQRFDGIRYGFRADDAKNLDEIYVNTRSQGFGDEVKRRIMLGTFSLSSGYYDAYFKKAGQVRTLIIQDFDKVFADYDLILGPTTPTVAFGLDTLNHDPVAMYLADLLTIPVNLAGLPGISIPAGFVDGLPVGLQLIGPKYAEETIYQAAAAFEAVTDYHKQQPIIFGGDK</sequence>
<name>GATA_STRP1</name>
<feature type="chain" id="PRO_0000105213" description="Glutamyl-tRNA(Gln) amidotransferase subunit A">
    <location>
        <begin position="1"/>
        <end position="488"/>
    </location>
</feature>
<feature type="active site" description="Charge relay system" evidence="1">
    <location>
        <position position="77"/>
    </location>
</feature>
<feature type="active site" description="Charge relay system" evidence="1">
    <location>
        <position position="152"/>
    </location>
</feature>
<feature type="active site" description="Acyl-ester intermediate" evidence="1">
    <location>
        <position position="176"/>
    </location>
</feature>
<feature type="sequence conflict" description="In Ref. 2; AAZ52125." evidence="2" ref="2">
    <original>S</original>
    <variation>G</variation>
    <location>
        <position position="185"/>
    </location>
</feature>
<proteinExistence type="inferred from homology"/>
<protein>
    <recommendedName>
        <fullName evidence="1">Glutamyl-tRNA(Gln) amidotransferase subunit A</fullName>
        <shortName evidence="1">Glu-ADT subunit A</shortName>
        <ecNumber evidence="1">6.3.5.7</ecNumber>
    </recommendedName>
</protein>
<accession>Q99YC0</accession>
<accession>Q48X00</accession>
<dbReference type="EC" id="6.3.5.7" evidence="1"/>
<dbReference type="EMBL" id="AE004092">
    <property type="protein sequence ID" value="AAK34510.1"/>
    <property type="molecule type" value="Genomic_DNA"/>
</dbReference>
<dbReference type="EMBL" id="CP000017">
    <property type="protein sequence ID" value="AAZ52125.1"/>
    <property type="molecule type" value="Genomic_DNA"/>
</dbReference>
<dbReference type="RefSeq" id="NP_269789.1">
    <property type="nucleotide sequence ID" value="NC_002737.2"/>
</dbReference>
<dbReference type="SMR" id="Q99YC0"/>
<dbReference type="PaxDb" id="1314-HKU360_01561"/>
<dbReference type="KEGG" id="spy:SPy_1771"/>
<dbReference type="KEGG" id="spz:M5005_Spy1507"/>
<dbReference type="PATRIC" id="fig|160490.10.peg.1540"/>
<dbReference type="HOGENOM" id="CLU_009600_0_3_9"/>
<dbReference type="OMA" id="QPASYCG"/>
<dbReference type="Proteomes" id="UP000000750">
    <property type="component" value="Chromosome"/>
</dbReference>
<dbReference type="GO" id="GO:0030956">
    <property type="term" value="C:glutamyl-tRNA(Gln) amidotransferase complex"/>
    <property type="evidence" value="ECO:0007669"/>
    <property type="project" value="InterPro"/>
</dbReference>
<dbReference type="GO" id="GO:0005524">
    <property type="term" value="F:ATP binding"/>
    <property type="evidence" value="ECO:0007669"/>
    <property type="project" value="UniProtKB-KW"/>
</dbReference>
<dbReference type="GO" id="GO:0050567">
    <property type="term" value="F:glutaminyl-tRNA synthase (glutamine-hydrolyzing) activity"/>
    <property type="evidence" value="ECO:0007669"/>
    <property type="project" value="UniProtKB-UniRule"/>
</dbReference>
<dbReference type="GO" id="GO:0006412">
    <property type="term" value="P:translation"/>
    <property type="evidence" value="ECO:0007669"/>
    <property type="project" value="UniProtKB-UniRule"/>
</dbReference>
<dbReference type="Gene3D" id="3.90.1300.10">
    <property type="entry name" value="Amidase signature (AS) domain"/>
    <property type="match status" value="1"/>
</dbReference>
<dbReference type="HAMAP" id="MF_00120">
    <property type="entry name" value="GatA"/>
    <property type="match status" value="1"/>
</dbReference>
<dbReference type="InterPro" id="IPR000120">
    <property type="entry name" value="Amidase"/>
</dbReference>
<dbReference type="InterPro" id="IPR020556">
    <property type="entry name" value="Amidase_CS"/>
</dbReference>
<dbReference type="InterPro" id="IPR023631">
    <property type="entry name" value="Amidase_dom"/>
</dbReference>
<dbReference type="InterPro" id="IPR036928">
    <property type="entry name" value="AS_sf"/>
</dbReference>
<dbReference type="InterPro" id="IPR004412">
    <property type="entry name" value="GatA"/>
</dbReference>
<dbReference type="NCBIfam" id="TIGR00132">
    <property type="entry name" value="gatA"/>
    <property type="match status" value="1"/>
</dbReference>
<dbReference type="PANTHER" id="PTHR11895:SF151">
    <property type="entry name" value="GLUTAMYL-TRNA(GLN) AMIDOTRANSFERASE SUBUNIT A"/>
    <property type="match status" value="1"/>
</dbReference>
<dbReference type="PANTHER" id="PTHR11895">
    <property type="entry name" value="TRANSAMIDASE"/>
    <property type="match status" value="1"/>
</dbReference>
<dbReference type="Pfam" id="PF01425">
    <property type="entry name" value="Amidase"/>
    <property type="match status" value="1"/>
</dbReference>
<dbReference type="SUPFAM" id="SSF75304">
    <property type="entry name" value="Amidase signature (AS) enzymes"/>
    <property type="match status" value="1"/>
</dbReference>
<dbReference type="PROSITE" id="PS00571">
    <property type="entry name" value="AMIDASES"/>
    <property type="match status" value="1"/>
</dbReference>
<organism>
    <name type="scientific">Streptococcus pyogenes serotype M1</name>
    <dbReference type="NCBI Taxonomy" id="301447"/>
    <lineage>
        <taxon>Bacteria</taxon>
        <taxon>Bacillati</taxon>
        <taxon>Bacillota</taxon>
        <taxon>Bacilli</taxon>
        <taxon>Lactobacillales</taxon>
        <taxon>Streptococcaceae</taxon>
        <taxon>Streptococcus</taxon>
    </lineage>
</organism>
<comment type="function">
    <text evidence="1">Allows the formation of correctly charged Gln-tRNA(Gln) through the transamidation of misacylated Glu-tRNA(Gln) in organisms which lack glutaminyl-tRNA synthetase. The reaction takes place in the presence of glutamine and ATP through an activated gamma-phospho-Glu-tRNA(Gln).</text>
</comment>
<comment type="catalytic activity">
    <reaction evidence="1">
        <text>L-glutamyl-tRNA(Gln) + L-glutamine + ATP + H2O = L-glutaminyl-tRNA(Gln) + L-glutamate + ADP + phosphate + H(+)</text>
        <dbReference type="Rhea" id="RHEA:17521"/>
        <dbReference type="Rhea" id="RHEA-COMP:9681"/>
        <dbReference type="Rhea" id="RHEA-COMP:9684"/>
        <dbReference type="ChEBI" id="CHEBI:15377"/>
        <dbReference type="ChEBI" id="CHEBI:15378"/>
        <dbReference type="ChEBI" id="CHEBI:29985"/>
        <dbReference type="ChEBI" id="CHEBI:30616"/>
        <dbReference type="ChEBI" id="CHEBI:43474"/>
        <dbReference type="ChEBI" id="CHEBI:58359"/>
        <dbReference type="ChEBI" id="CHEBI:78520"/>
        <dbReference type="ChEBI" id="CHEBI:78521"/>
        <dbReference type="ChEBI" id="CHEBI:456216"/>
        <dbReference type="EC" id="6.3.5.7"/>
    </reaction>
</comment>
<comment type="subunit">
    <text evidence="1">Heterotrimer of A, B and C subunits.</text>
</comment>
<comment type="similarity">
    <text evidence="1">Belongs to the amidase family. GatA subfamily.</text>
</comment>
<gene>
    <name evidence="1" type="primary">gatA</name>
    <name type="ordered locus">SPy_1771</name>
    <name type="ordered locus">M5005_Spy1507</name>
</gene>
<evidence type="ECO:0000255" key="1">
    <source>
        <dbReference type="HAMAP-Rule" id="MF_00120"/>
    </source>
</evidence>
<evidence type="ECO:0000305" key="2"/>
<reference key="1">
    <citation type="journal article" date="2001" name="Proc. Natl. Acad. Sci. U.S.A.">
        <title>Complete genome sequence of an M1 strain of Streptococcus pyogenes.</title>
        <authorList>
            <person name="Ferretti J.J."/>
            <person name="McShan W.M."/>
            <person name="Ajdic D.J."/>
            <person name="Savic D.J."/>
            <person name="Savic G."/>
            <person name="Lyon K."/>
            <person name="Primeaux C."/>
            <person name="Sezate S."/>
            <person name="Suvorov A.N."/>
            <person name="Kenton S."/>
            <person name="Lai H.S."/>
            <person name="Lin S.P."/>
            <person name="Qian Y."/>
            <person name="Jia H.G."/>
            <person name="Najar F.Z."/>
            <person name="Ren Q."/>
            <person name="Zhu H."/>
            <person name="Song L."/>
            <person name="White J."/>
            <person name="Yuan X."/>
            <person name="Clifton S.W."/>
            <person name="Roe B.A."/>
            <person name="McLaughlin R.E."/>
        </authorList>
    </citation>
    <scope>NUCLEOTIDE SEQUENCE [LARGE SCALE GENOMIC DNA]</scope>
    <source>
        <strain>ATCC 700294 / SF370 / Serotype M1</strain>
    </source>
</reference>
<reference key="2">
    <citation type="journal article" date="2005" name="J. Infect. Dis.">
        <title>Evolutionary origin and emergence of a highly successful clone of serotype M1 group A Streptococcus involved multiple horizontal gene transfer events.</title>
        <authorList>
            <person name="Sumby P."/>
            <person name="Porcella S.F."/>
            <person name="Madrigal A.G."/>
            <person name="Barbian K.D."/>
            <person name="Virtaneva K."/>
            <person name="Ricklefs S.M."/>
            <person name="Sturdevant D.E."/>
            <person name="Graham M.R."/>
            <person name="Vuopio-Varkila J."/>
            <person name="Hoe N.P."/>
            <person name="Musser J.M."/>
        </authorList>
    </citation>
    <scope>NUCLEOTIDE SEQUENCE [LARGE SCALE GENOMIC DNA]</scope>
    <source>
        <strain>ATCC BAA-947 / MGAS5005 / Serotype M1</strain>
    </source>
</reference>